<proteinExistence type="inferred from homology"/>
<gene>
    <name evidence="1" type="primary">aat</name>
    <name type="ordered locus">Bcenmc03_1532</name>
</gene>
<feature type="chain" id="PRO_1000131907" description="Leucyl/phenylalanyl-tRNA--protein transferase">
    <location>
        <begin position="1"/>
        <end position="254"/>
    </location>
</feature>
<organism>
    <name type="scientific">Burkholderia orbicola (strain MC0-3)</name>
    <dbReference type="NCBI Taxonomy" id="406425"/>
    <lineage>
        <taxon>Bacteria</taxon>
        <taxon>Pseudomonadati</taxon>
        <taxon>Pseudomonadota</taxon>
        <taxon>Betaproteobacteria</taxon>
        <taxon>Burkholderiales</taxon>
        <taxon>Burkholderiaceae</taxon>
        <taxon>Burkholderia</taxon>
        <taxon>Burkholderia cepacia complex</taxon>
        <taxon>Burkholderia orbicola</taxon>
    </lineage>
</organism>
<comment type="function">
    <text evidence="1">Functions in the N-end rule pathway of protein degradation where it conjugates Leu, Phe and, less efficiently, Met from aminoacyl-tRNAs to the N-termini of proteins containing an N-terminal arginine or lysine.</text>
</comment>
<comment type="catalytic activity">
    <reaction evidence="1">
        <text>N-terminal L-lysyl-[protein] + L-leucyl-tRNA(Leu) = N-terminal L-leucyl-L-lysyl-[protein] + tRNA(Leu) + H(+)</text>
        <dbReference type="Rhea" id="RHEA:12340"/>
        <dbReference type="Rhea" id="RHEA-COMP:9613"/>
        <dbReference type="Rhea" id="RHEA-COMP:9622"/>
        <dbReference type="Rhea" id="RHEA-COMP:12670"/>
        <dbReference type="Rhea" id="RHEA-COMP:12671"/>
        <dbReference type="ChEBI" id="CHEBI:15378"/>
        <dbReference type="ChEBI" id="CHEBI:65249"/>
        <dbReference type="ChEBI" id="CHEBI:78442"/>
        <dbReference type="ChEBI" id="CHEBI:78494"/>
        <dbReference type="ChEBI" id="CHEBI:133043"/>
        <dbReference type="EC" id="2.3.2.6"/>
    </reaction>
</comment>
<comment type="catalytic activity">
    <reaction evidence="1">
        <text>N-terminal L-arginyl-[protein] + L-leucyl-tRNA(Leu) = N-terminal L-leucyl-L-arginyl-[protein] + tRNA(Leu) + H(+)</text>
        <dbReference type="Rhea" id="RHEA:50416"/>
        <dbReference type="Rhea" id="RHEA-COMP:9613"/>
        <dbReference type="Rhea" id="RHEA-COMP:9622"/>
        <dbReference type="Rhea" id="RHEA-COMP:12672"/>
        <dbReference type="Rhea" id="RHEA-COMP:12673"/>
        <dbReference type="ChEBI" id="CHEBI:15378"/>
        <dbReference type="ChEBI" id="CHEBI:64719"/>
        <dbReference type="ChEBI" id="CHEBI:78442"/>
        <dbReference type="ChEBI" id="CHEBI:78494"/>
        <dbReference type="ChEBI" id="CHEBI:133044"/>
        <dbReference type="EC" id="2.3.2.6"/>
    </reaction>
</comment>
<comment type="catalytic activity">
    <reaction evidence="1">
        <text>L-phenylalanyl-tRNA(Phe) + an N-terminal L-alpha-aminoacyl-[protein] = an N-terminal L-phenylalanyl-L-alpha-aminoacyl-[protein] + tRNA(Phe)</text>
        <dbReference type="Rhea" id="RHEA:43632"/>
        <dbReference type="Rhea" id="RHEA-COMP:9668"/>
        <dbReference type="Rhea" id="RHEA-COMP:9699"/>
        <dbReference type="Rhea" id="RHEA-COMP:10636"/>
        <dbReference type="Rhea" id="RHEA-COMP:10637"/>
        <dbReference type="ChEBI" id="CHEBI:78442"/>
        <dbReference type="ChEBI" id="CHEBI:78531"/>
        <dbReference type="ChEBI" id="CHEBI:78597"/>
        <dbReference type="ChEBI" id="CHEBI:83561"/>
        <dbReference type="EC" id="2.3.2.6"/>
    </reaction>
</comment>
<comment type="subcellular location">
    <subcellularLocation>
        <location evidence="1">Cytoplasm</location>
    </subcellularLocation>
</comment>
<comment type="similarity">
    <text evidence="1">Belongs to the L/F-transferase family.</text>
</comment>
<protein>
    <recommendedName>
        <fullName evidence="1">Leucyl/phenylalanyl-tRNA--protein transferase</fullName>
        <ecNumber evidence="1">2.3.2.6</ecNumber>
    </recommendedName>
    <alternativeName>
        <fullName evidence="1">L/F-transferase</fullName>
    </alternativeName>
    <alternativeName>
        <fullName evidence="1">Leucyltransferase</fullName>
    </alternativeName>
    <alternativeName>
        <fullName evidence="1">Phenyalanyltransferase</fullName>
    </alternativeName>
</protein>
<evidence type="ECO:0000255" key="1">
    <source>
        <dbReference type="HAMAP-Rule" id="MF_00688"/>
    </source>
</evidence>
<sequence>MVPWLGPDDPFPSIERALGPATGAPGLLAASADLLPSRLIDAYLRGIFPWYSDGQPVLWWSPDPRMILVPAEFKVSPSLRKTLKRVLRAPEWEVRVDHDFAGVMRACAQAPRRGQRGTWITAEIIDAYTSLYRSGNAHSIETWHDGRRVGGLYGVSFGRMFFGESMYADVTDASKIALAALIAHLREQGLEMIDCQQNTSHLASLGGREIARKAFVAHVRSAVAEPPIPWQFDKRVLAALTSPAETAAPTGTER</sequence>
<name>LFTR_BURO0</name>
<dbReference type="EC" id="2.3.2.6" evidence="1"/>
<dbReference type="EMBL" id="CP000958">
    <property type="protein sequence ID" value="ACA90707.1"/>
    <property type="molecule type" value="Genomic_DNA"/>
</dbReference>
<dbReference type="RefSeq" id="WP_006476112.1">
    <property type="nucleotide sequence ID" value="NC_010508.1"/>
</dbReference>
<dbReference type="SMR" id="B1K0S6"/>
<dbReference type="GeneID" id="83048331"/>
<dbReference type="KEGG" id="bcm:Bcenmc03_1532"/>
<dbReference type="HOGENOM" id="CLU_075045_0_0_4"/>
<dbReference type="Proteomes" id="UP000002169">
    <property type="component" value="Chromosome 1"/>
</dbReference>
<dbReference type="GO" id="GO:0005737">
    <property type="term" value="C:cytoplasm"/>
    <property type="evidence" value="ECO:0007669"/>
    <property type="project" value="UniProtKB-SubCell"/>
</dbReference>
<dbReference type="GO" id="GO:0008914">
    <property type="term" value="F:leucyl-tRNA--protein transferase activity"/>
    <property type="evidence" value="ECO:0007669"/>
    <property type="project" value="UniProtKB-UniRule"/>
</dbReference>
<dbReference type="GO" id="GO:0030163">
    <property type="term" value="P:protein catabolic process"/>
    <property type="evidence" value="ECO:0007669"/>
    <property type="project" value="UniProtKB-UniRule"/>
</dbReference>
<dbReference type="Gene3D" id="3.40.630.70">
    <property type="entry name" value="Leucyl/phenylalanyl-tRNA-protein transferase, C-terminal domain"/>
    <property type="match status" value="1"/>
</dbReference>
<dbReference type="Gene3D" id="3.30.70.3550">
    <property type="entry name" value="Leucyl/phenylalanyl-tRNA-protein transferase, N-terminal domain"/>
    <property type="match status" value="1"/>
</dbReference>
<dbReference type="HAMAP" id="MF_00688">
    <property type="entry name" value="Leu_Phe_trans"/>
    <property type="match status" value="1"/>
</dbReference>
<dbReference type="InterPro" id="IPR016181">
    <property type="entry name" value="Acyl_CoA_acyltransferase"/>
</dbReference>
<dbReference type="InterPro" id="IPR004616">
    <property type="entry name" value="Leu/Phe-tRNA_Trfase"/>
</dbReference>
<dbReference type="InterPro" id="IPR042203">
    <property type="entry name" value="Leu/Phe-tRNA_Trfase_C"/>
</dbReference>
<dbReference type="InterPro" id="IPR042221">
    <property type="entry name" value="Leu/Phe-tRNA_Trfase_N"/>
</dbReference>
<dbReference type="NCBIfam" id="TIGR00667">
    <property type="entry name" value="aat"/>
    <property type="match status" value="1"/>
</dbReference>
<dbReference type="PANTHER" id="PTHR30098">
    <property type="entry name" value="LEUCYL/PHENYLALANYL-TRNA--PROTEIN TRANSFERASE"/>
    <property type="match status" value="1"/>
</dbReference>
<dbReference type="PANTHER" id="PTHR30098:SF2">
    <property type="entry name" value="LEUCYL_PHENYLALANYL-TRNA--PROTEIN TRANSFERASE"/>
    <property type="match status" value="1"/>
</dbReference>
<dbReference type="Pfam" id="PF03588">
    <property type="entry name" value="Leu_Phe_trans"/>
    <property type="match status" value="1"/>
</dbReference>
<dbReference type="SUPFAM" id="SSF55729">
    <property type="entry name" value="Acyl-CoA N-acyltransferases (Nat)"/>
    <property type="match status" value="1"/>
</dbReference>
<reference key="1">
    <citation type="submission" date="2008-02" db="EMBL/GenBank/DDBJ databases">
        <title>Complete sequence of chromosome 1 of Burkholderia cenocepacia MC0-3.</title>
        <authorList>
            <person name="Copeland A."/>
            <person name="Lucas S."/>
            <person name="Lapidus A."/>
            <person name="Barry K."/>
            <person name="Bruce D."/>
            <person name="Goodwin L."/>
            <person name="Glavina del Rio T."/>
            <person name="Dalin E."/>
            <person name="Tice H."/>
            <person name="Pitluck S."/>
            <person name="Chain P."/>
            <person name="Malfatti S."/>
            <person name="Shin M."/>
            <person name="Vergez L."/>
            <person name="Schmutz J."/>
            <person name="Larimer F."/>
            <person name="Land M."/>
            <person name="Hauser L."/>
            <person name="Kyrpides N."/>
            <person name="Mikhailova N."/>
            <person name="Tiedje J."/>
            <person name="Richardson P."/>
        </authorList>
    </citation>
    <scope>NUCLEOTIDE SEQUENCE [LARGE SCALE GENOMIC DNA]</scope>
    <source>
        <strain>MC0-3</strain>
    </source>
</reference>
<accession>B1K0S6</accession>
<keyword id="KW-0012">Acyltransferase</keyword>
<keyword id="KW-0963">Cytoplasm</keyword>
<keyword id="KW-0808">Transferase</keyword>